<keyword id="KW-0030">Aminoacyl-tRNA synthetase</keyword>
<keyword id="KW-0067">ATP-binding</keyword>
<keyword id="KW-0963">Cytoplasm</keyword>
<keyword id="KW-0436">Ligase</keyword>
<keyword id="KW-0547">Nucleotide-binding</keyword>
<keyword id="KW-0648">Protein biosynthesis</keyword>
<evidence type="ECO:0000255" key="1">
    <source>
        <dbReference type="HAMAP-Rule" id="MF_00123"/>
    </source>
</evidence>
<reference key="1">
    <citation type="journal article" date="2008" name="J. Bacteriol.">
        <title>Comparative genome sequence analysis of multidrug-resistant Acinetobacter baumannii.</title>
        <authorList>
            <person name="Adams M.D."/>
            <person name="Goglin K."/>
            <person name="Molyneaux N."/>
            <person name="Hujer K.M."/>
            <person name="Lavender H."/>
            <person name="Jamison J.J."/>
            <person name="MacDonald I.J."/>
            <person name="Martin K.M."/>
            <person name="Russo T."/>
            <person name="Campagnari A.A."/>
            <person name="Hujer A.M."/>
            <person name="Bonomo R.A."/>
            <person name="Gill S.R."/>
        </authorList>
    </citation>
    <scope>NUCLEOTIDE SEQUENCE [LARGE SCALE GENOMIC DNA]</scope>
    <source>
        <strain>AB0057</strain>
    </source>
</reference>
<gene>
    <name evidence="1" type="primary">argS</name>
    <name type="ordered locus">AB57_0178</name>
</gene>
<organism>
    <name type="scientific">Acinetobacter baumannii (strain AB0057)</name>
    <dbReference type="NCBI Taxonomy" id="480119"/>
    <lineage>
        <taxon>Bacteria</taxon>
        <taxon>Pseudomonadati</taxon>
        <taxon>Pseudomonadota</taxon>
        <taxon>Gammaproteobacteria</taxon>
        <taxon>Moraxellales</taxon>
        <taxon>Moraxellaceae</taxon>
        <taxon>Acinetobacter</taxon>
        <taxon>Acinetobacter calcoaceticus/baumannii complex</taxon>
    </lineage>
</organism>
<accession>B7I1U9</accession>
<proteinExistence type="inferred from homology"/>
<protein>
    <recommendedName>
        <fullName evidence="1">Arginine--tRNA ligase</fullName>
        <ecNumber evidence="1">6.1.1.19</ecNumber>
    </recommendedName>
    <alternativeName>
        <fullName evidence="1">Arginyl-tRNA synthetase</fullName>
        <shortName evidence="1">ArgRS</shortName>
    </alternativeName>
</protein>
<comment type="catalytic activity">
    <reaction evidence="1">
        <text>tRNA(Arg) + L-arginine + ATP = L-arginyl-tRNA(Arg) + AMP + diphosphate</text>
        <dbReference type="Rhea" id="RHEA:20301"/>
        <dbReference type="Rhea" id="RHEA-COMP:9658"/>
        <dbReference type="Rhea" id="RHEA-COMP:9673"/>
        <dbReference type="ChEBI" id="CHEBI:30616"/>
        <dbReference type="ChEBI" id="CHEBI:32682"/>
        <dbReference type="ChEBI" id="CHEBI:33019"/>
        <dbReference type="ChEBI" id="CHEBI:78442"/>
        <dbReference type="ChEBI" id="CHEBI:78513"/>
        <dbReference type="ChEBI" id="CHEBI:456215"/>
        <dbReference type="EC" id="6.1.1.19"/>
    </reaction>
</comment>
<comment type="subunit">
    <text evidence="1">Monomer.</text>
</comment>
<comment type="subcellular location">
    <subcellularLocation>
        <location evidence="1">Cytoplasm</location>
    </subcellularLocation>
</comment>
<comment type="similarity">
    <text evidence="1">Belongs to the class-I aminoacyl-tRNA synthetase family.</text>
</comment>
<feature type="chain" id="PRO_1000198864" description="Arginine--tRNA ligase">
    <location>
        <begin position="1"/>
        <end position="596"/>
    </location>
</feature>
<feature type="short sequence motif" description="'HIGH' region">
    <location>
        <begin position="128"/>
        <end position="138"/>
    </location>
</feature>
<name>SYR_ACIB5</name>
<sequence>MNTAIQAALDHAVQTLQQEGVLPSDWNNSSNLTRTKDRSHGDFASNIAMIGSKAAGMKPRDLAEKILAALPEVADISKAEIAGPGFINFFLNADQRFAILDQIQAQKESFGRSQSNAAKKIQVEFVSANPTSSLHVGHGRGAAYGMTVANLLEATGAKVDREYYVNDAGRQMDILATSTYLRYLELLGQNLVFPKNAYQGDYVKEIAQGIIDKDGDAYVREVANVYKDVPEDVQYAEELDSEGNKVVLSGDKEKHIDGLIANSQQLLGEGYRVFHQAALHAILDDIKDDLADFGVTFNQWFSEASLSAKIDEALETLDQRGFLYEKDGNIWFKSTEFGDEKDRVVKRRNGQTTYFASDIAYHLNKLQRGYTDLVDIWGSDHHGYISRVKAAIDAMGYDSKKLTVLLVQFVSLWRGGEMVQMSSRSGQFVTLRDLRKEVGNDAARFYYVMRKSEQHIDFDLDLAVSQSKDNAVYYIQYAHARICRMLEKAASTGLQFEVSAARSHAARLSLDAETEILAKLAAYPDVVLRAANAYEPHQVGNYLKELAALFHGWYNEHKVLSDDAELTQARLLLSINVQQVLRNGLELLGVSAPEAM</sequence>
<dbReference type="EC" id="6.1.1.19" evidence="1"/>
<dbReference type="EMBL" id="CP001182">
    <property type="protein sequence ID" value="ACJ39609.1"/>
    <property type="molecule type" value="Genomic_DNA"/>
</dbReference>
<dbReference type="RefSeq" id="WP_001090284.1">
    <property type="nucleotide sequence ID" value="NC_011586.2"/>
</dbReference>
<dbReference type="SMR" id="B7I1U9"/>
<dbReference type="GeneID" id="92892152"/>
<dbReference type="KEGG" id="abn:AB57_0178"/>
<dbReference type="HOGENOM" id="CLU_006406_0_1_6"/>
<dbReference type="Proteomes" id="UP000007094">
    <property type="component" value="Chromosome"/>
</dbReference>
<dbReference type="GO" id="GO:0005737">
    <property type="term" value="C:cytoplasm"/>
    <property type="evidence" value="ECO:0007669"/>
    <property type="project" value="UniProtKB-SubCell"/>
</dbReference>
<dbReference type="GO" id="GO:0004814">
    <property type="term" value="F:arginine-tRNA ligase activity"/>
    <property type="evidence" value="ECO:0007669"/>
    <property type="project" value="UniProtKB-UniRule"/>
</dbReference>
<dbReference type="GO" id="GO:0005524">
    <property type="term" value="F:ATP binding"/>
    <property type="evidence" value="ECO:0007669"/>
    <property type="project" value="UniProtKB-UniRule"/>
</dbReference>
<dbReference type="GO" id="GO:0006420">
    <property type="term" value="P:arginyl-tRNA aminoacylation"/>
    <property type="evidence" value="ECO:0007669"/>
    <property type="project" value="UniProtKB-UniRule"/>
</dbReference>
<dbReference type="CDD" id="cd00671">
    <property type="entry name" value="ArgRS_core"/>
    <property type="match status" value="1"/>
</dbReference>
<dbReference type="FunFam" id="1.10.730.10:FF:000008">
    <property type="entry name" value="Arginine--tRNA ligase"/>
    <property type="match status" value="1"/>
</dbReference>
<dbReference type="Gene3D" id="3.30.1360.70">
    <property type="entry name" value="Arginyl tRNA synthetase N-terminal domain"/>
    <property type="match status" value="1"/>
</dbReference>
<dbReference type="Gene3D" id="3.40.50.620">
    <property type="entry name" value="HUPs"/>
    <property type="match status" value="1"/>
</dbReference>
<dbReference type="Gene3D" id="1.10.730.10">
    <property type="entry name" value="Isoleucyl-tRNA Synthetase, Domain 1"/>
    <property type="match status" value="1"/>
</dbReference>
<dbReference type="HAMAP" id="MF_00123">
    <property type="entry name" value="Arg_tRNA_synth"/>
    <property type="match status" value="1"/>
</dbReference>
<dbReference type="InterPro" id="IPR001278">
    <property type="entry name" value="Arg-tRNA-ligase"/>
</dbReference>
<dbReference type="InterPro" id="IPR005148">
    <property type="entry name" value="Arg-tRNA-synth_N"/>
</dbReference>
<dbReference type="InterPro" id="IPR036695">
    <property type="entry name" value="Arg-tRNA-synth_N_sf"/>
</dbReference>
<dbReference type="InterPro" id="IPR035684">
    <property type="entry name" value="ArgRS_core"/>
</dbReference>
<dbReference type="InterPro" id="IPR008909">
    <property type="entry name" value="DALR_anticod-bd"/>
</dbReference>
<dbReference type="InterPro" id="IPR014729">
    <property type="entry name" value="Rossmann-like_a/b/a_fold"/>
</dbReference>
<dbReference type="InterPro" id="IPR009080">
    <property type="entry name" value="tRNAsynth_Ia_anticodon-bd"/>
</dbReference>
<dbReference type="NCBIfam" id="TIGR00456">
    <property type="entry name" value="argS"/>
    <property type="match status" value="1"/>
</dbReference>
<dbReference type="PANTHER" id="PTHR11956:SF5">
    <property type="entry name" value="ARGININE--TRNA LIGASE, CYTOPLASMIC"/>
    <property type="match status" value="1"/>
</dbReference>
<dbReference type="PANTHER" id="PTHR11956">
    <property type="entry name" value="ARGINYL-TRNA SYNTHETASE"/>
    <property type="match status" value="1"/>
</dbReference>
<dbReference type="Pfam" id="PF03485">
    <property type="entry name" value="Arg_tRNA_synt_N"/>
    <property type="match status" value="1"/>
</dbReference>
<dbReference type="Pfam" id="PF05746">
    <property type="entry name" value="DALR_1"/>
    <property type="match status" value="1"/>
</dbReference>
<dbReference type="Pfam" id="PF00750">
    <property type="entry name" value="tRNA-synt_1d"/>
    <property type="match status" value="2"/>
</dbReference>
<dbReference type="PRINTS" id="PR01038">
    <property type="entry name" value="TRNASYNTHARG"/>
</dbReference>
<dbReference type="SMART" id="SM01016">
    <property type="entry name" value="Arg_tRNA_synt_N"/>
    <property type="match status" value="1"/>
</dbReference>
<dbReference type="SMART" id="SM00836">
    <property type="entry name" value="DALR_1"/>
    <property type="match status" value="1"/>
</dbReference>
<dbReference type="SUPFAM" id="SSF47323">
    <property type="entry name" value="Anticodon-binding domain of a subclass of class I aminoacyl-tRNA synthetases"/>
    <property type="match status" value="1"/>
</dbReference>
<dbReference type="SUPFAM" id="SSF55190">
    <property type="entry name" value="Arginyl-tRNA synthetase (ArgRS), N-terminal 'additional' domain"/>
    <property type="match status" value="1"/>
</dbReference>
<dbReference type="SUPFAM" id="SSF52374">
    <property type="entry name" value="Nucleotidylyl transferase"/>
    <property type="match status" value="1"/>
</dbReference>